<feature type="chain" id="PRO_1000199885" description="Urease subunit gamma">
    <location>
        <begin position="1"/>
        <end position="100"/>
    </location>
</feature>
<protein>
    <recommendedName>
        <fullName evidence="1">Urease subunit gamma</fullName>
        <ecNumber evidence="1">3.5.1.5</ecNumber>
    </recommendedName>
    <alternativeName>
        <fullName evidence="1">Urea amidohydrolase subunit gamma</fullName>
    </alternativeName>
</protein>
<proteinExistence type="inferred from homology"/>
<organism>
    <name type="scientific">Streptomyces griseus subsp. griseus (strain JCM 4626 / CBS 651.72 / NBRC 13350 / KCC S-0626 / ISP 5235)</name>
    <dbReference type="NCBI Taxonomy" id="455632"/>
    <lineage>
        <taxon>Bacteria</taxon>
        <taxon>Bacillati</taxon>
        <taxon>Actinomycetota</taxon>
        <taxon>Actinomycetes</taxon>
        <taxon>Kitasatosporales</taxon>
        <taxon>Streptomycetaceae</taxon>
        <taxon>Streptomyces</taxon>
    </lineage>
</organism>
<evidence type="ECO:0000255" key="1">
    <source>
        <dbReference type="HAMAP-Rule" id="MF_00739"/>
    </source>
</evidence>
<accession>B1W5G7</accession>
<sequence>MQLTPHEQERLLIHVAADVAEKRRARGLRLNHPEAVALITSHLLEGARDGRTVAELMVSGRTLLTRDDVMEGIPEMLHDVQVEATFPDGTKLVTVHDPIV</sequence>
<comment type="catalytic activity">
    <reaction evidence="1">
        <text>urea + 2 H2O + H(+) = hydrogencarbonate + 2 NH4(+)</text>
        <dbReference type="Rhea" id="RHEA:20557"/>
        <dbReference type="ChEBI" id="CHEBI:15377"/>
        <dbReference type="ChEBI" id="CHEBI:15378"/>
        <dbReference type="ChEBI" id="CHEBI:16199"/>
        <dbReference type="ChEBI" id="CHEBI:17544"/>
        <dbReference type="ChEBI" id="CHEBI:28938"/>
        <dbReference type="EC" id="3.5.1.5"/>
    </reaction>
</comment>
<comment type="pathway">
    <text evidence="1">Nitrogen metabolism; urea degradation; CO(2) and NH(3) from urea (urease route): step 1/1.</text>
</comment>
<comment type="subunit">
    <text evidence="1">Heterotrimer of UreA (gamma), UreB (beta) and UreC (alpha) subunits. Three heterotrimers associate to form the active enzyme.</text>
</comment>
<comment type="subcellular location">
    <subcellularLocation>
        <location evidence="1">Cytoplasm</location>
    </subcellularLocation>
</comment>
<comment type="similarity">
    <text evidence="1">Belongs to the urease gamma subunit family.</text>
</comment>
<reference key="1">
    <citation type="journal article" date="2008" name="J. Bacteriol.">
        <title>Genome sequence of the streptomycin-producing microorganism Streptomyces griseus IFO 13350.</title>
        <authorList>
            <person name="Ohnishi Y."/>
            <person name="Ishikawa J."/>
            <person name="Hara H."/>
            <person name="Suzuki H."/>
            <person name="Ikenoya M."/>
            <person name="Ikeda H."/>
            <person name="Yamashita A."/>
            <person name="Hattori M."/>
            <person name="Horinouchi S."/>
        </authorList>
    </citation>
    <scope>NUCLEOTIDE SEQUENCE [LARGE SCALE GENOMIC DNA]</scope>
    <source>
        <strain>JCM 4626 / CBS 651.72 / NBRC 13350 / KCC S-0626 / ISP 5235</strain>
    </source>
</reference>
<name>URE3_STRGG</name>
<dbReference type="EC" id="3.5.1.5" evidence="1"/>
<dbReference type="EMBL" id="AP009493">
    <property type="protein sequence ID" value="BAG23124.1"/>
    <property type="molecule type" value="Genomic_DNA"/>
</dbReference>
<dbReference type="RefSeq" id="WP_003970613.1">
    <property type="nucleotide sequence ID" value="NC_010572.1"/>
</dbReference>
<dbReference type="SMR" id="B1W5G7"/>
<dbReference type="KEGG" id="sgr:SGR_6295"/>
<dbReference type="eggNOG" id="COG0831">
    <property type="taxonomic scope" value="Bacteria"/>
</dbReference>
<dbReference type="HOGENOM" id="CLU_145825_1_0_11"/>
<dbReference type="UniPathway" id="UPA00258">
    <property type="reaction ID" value="UER00370"/>
</dbReference>
<dbReference type="Proteomes" id="UP000001685">
    <property type="component" value="Chromosome"/>
</dbReference>
<dbReference type="GO" id="GO:0005737">
    <property type="term" value="C:cytoplasm"/>
    <property type="evidence" value="ECO:0007669"/>
    <property type="project" value="UniProtKB-SubCell"/>
</dbReference>
<dbReference type="GO" id="GO:0016151">
    <property type="term" value="F:nickel cation binding"/>
    <property type="evidence" value="ECO:0007669"/>
    <property type="project" value="InterPro"/>
</dbReference>
<dbReference type="GO" id="GO:0009039">
    <property type="term" value="F:urease activity"/>
    <property type="evidence" value="ECO:0007669"/>
    <property type="project" value="UniProtKB-UniRule"/>
</dbReference>
<dbReference type="GO" id="GO:0043419">
    <property type="term" value="P:urea catabolic process"/>
    <property type="evidence" value="ECO:0007669"/>
    <property type="project" value="UniProtKB-UniRule"/>
</dbReference>
<dbReference type="CDD" id="cd00390">
    <property type="entry name" value="Urease_gamma"/>
    <property type="match status" value="1"/>
</dbReference>
<dbReference type="Gene3D" id="3.30.280.10">
    <property type="entry name" value="Urease, gamma-like subunit"/>
    <property type="match status" value="1"/>
</dbReference>
<dbReference type="HAMAP" id="MF_00739">
    <property type="entry name" value="Urease_gamma"/>
    <property type="match status" value="1"/>
</dbReference>
<dbReference type="InterPro" id="IPR012010">
    <property type="entry name" value="Urease_gamma"/>
</dbReference>
<dbReference type="InterPro" id="IPR002026">
    <property type="entry name" value="Urease_gamma/gamma-beta_su"/>
</dbReference>
<dbReference type="InterPro" id="IPR036463">
    <property type="entry name" value="Urease_gamma_sf"/>
</dbReference>
<dbReference type="InterPro" id="IPR050069">
    <property type="entry name" value="Urease_subunit"/>
</dbReference>
<dbReference type="NCBIfam" id="NF009712">
    <property type="entry name" value="PRK13241.1"/>
    <property type="match status" value="1"/>
</dbReference>
<dbReference type="NCBIfam" id="TIGR00193">
    <property type="entry name" value="urease_gam"/>
    <property type="match status" value="1"/>
</dbReference>
<dbReference type="PANTHER" id="PTHR33569">
    <property type="entry name" value="UREASE"/>
    <property type="match status" value="1"/>
</dbReference>
<dbReference type="PANTHER" id="PTHR33569:SF1">
    <property type="entry name" value="UREASE"/>
    <property type="match status" value="1"/>
</dbReference>
<dbReference type="Pfam" id="PF00547">
    <property type="entry name" value="Urease_gamma"/>
    <property type="match status" value="1"/>
</dbReference>
<dbReference type="PIRSF" id="PIRSF001223">
    <property type="entry name" value="Urease_gamma"/>
    <property type="match status" value="1"/>
</dbReference>
<dbReference type="SUPFAM" id="SSF54111">
    <property type="entry name" value="Urease, gamma-subunit"/>
    <property type="match status" value="1"/>
</dbReference>
<gene>
    <name evidence="1" type="primary">ureA</name>
    <name type="ordered locus">SGR_6295</name>
</gene>
<keyword id="KW-0963">Cytoplasm</keyword>
<keyword id="KW-0378">Hydrolase</keyword>